<gene>
    <name type="ORF">DDB_G0293278</name>
</gene>
<proteinExistence type="predicted"/>
<dbReference type="EMBL" id="AAFI02000200">
    <property type="protein sequence ID" value="EAL60838.1"/>
    <property type="molecule type" value="Genomic_DNA"/>
</dbReference>
<dbReference type="RefSeq" id="XP_629247.1">
    <property type="nucleotide sequence ID" value="XM_629245.1"/>
</dbReference>
<dbReference type="PaxDb" id="44689-DDB0305132"/>
<dbReference type="EnsemblProtists" id="EAL60838">
    <property type="protein sequence ID" value="EAL60838"/>
    <property type="gene ID" value="DDB_G0293278"/>
</dbReference>
<dbReference type="GeneID" id="8629129"/>
<dbReference type="KEGG" id="ddi:DDB_G0293278"/>
<dbReference type="dictyBase" id="DDB_G0293278"/>
<dbReference type="VEuPathDB" id="AmoebaDB:DDB_G0293278"/>
<dbReference type="HOGENOM" id="CLU_3110403_0_0_1"/>
<dbReference type="InParanoid" id="Q54C19"/>
<dbReference type="PRO" id="PR:Q54C19"/>
<dbReference type="Proteomes" id="UP000002195">
    <property type="component" value="Chromosome 6"/>
</dbReference>
<accession>Q54C19</accession>
<name>Y5562_DICDI</name>
<keyword id="KW-1185">Reference proteome</keyword>
<reference key="1">
    <citation type="journal article" date="2005" name="Nature">
        <title>The genome of the social amoeba Dictyostelium discoideum.</title>
        <authorList>
            <person name="Eichinger L."/>
            <person name="Pachebat J.A."/>
            <person name="Gloeckner G."/>
            <person name="Rajandream M.A."/>
            <person name="Sucgang R."/>
            <person name="Berriman M."/>
            <person name="Song J."/>
            <person name="Olsen R."/>
            <person name="Szafranski K."/>
            <person name="Xu Q."/>
            <person name="Tunggal B."/>
            <person name="Kummerfeld S."/>
            <person name="Madera M."/>
            <person name="Konfortov B.A."/>
            <person name="Rivero F."/>
            <person name="Bankier A.T."/>
            <person name="Lehmann R."/>
            <person name="Hamlin N."/>
            <person name="Davies R."/>
            <person name="Gaudet P."/>
            <person name="Fey P."/>
            <person name="Pilcher K."/>
            <person name="Chen G."/>
            <person name="Saunders D."/>
            <person name="Sodergren E.J."/>
            <person name="Davis P."/>
            <person name="Kerhornou A."/>
            <person name="Nie X."/>
            <person name="Hall N."/>
            <person name="Anjard C."/>
            <person name="Hemphill L."/>
            <person name="Bason N."/>
            <person name="Farbrother P."/>
            <person name="Desany B."/>
            <person name="Just E."/>
            <person name="Morio T."/>
            <person name="Rost R."/>
            <person name="Churcher C.M."/>
            <person name="Cooper J."/>
            <person name="Haydock S."/>
            <person name="van Driessche N."/>
            <person name="Cronin A."/>
            <person name="Goodhead I."/>
            <person name="Muzny D.M."/>
            <person name="Mourier T."/>
            <person name="Pain A."/>
            <person name="Lu M."/>
            <person name="Harper D."/>
            <person name="Lindsay R."/>
            <person name="Hauser H."/>
            <person name="James K.D."/>
            <person name="Quiles M."/>
            <person name="Madan Babu M."/>
            <person name="Saito T."/>
            <person name="Buchrieser C."/>
            <person name="Wardroper A."/>
            <person name="Felder M."/>
            <person name="Thangavelu M."/>
            <person name="Johnson D."/>
            <person name="Knights A."/>
            <person name="Loulseged H."/>
            <person name="Mungall K.L."/>
            <person name="Oliver K."/>
            <person name="Price C."/>
            <person name="Quail M.A."/>
            <person name="Urushihara H."/>
            <person name="Hernandez J."/>
            <person name="Rabbinowitsch E."/>
            <person name="Steffen D."/>
            <person name="Sanders M."/>
            <person name="Ma J."/>
            <person name="Kohara Y."/>
            <person name="Sharp S."/>
            <person name="Simmonds M.N."/>
            <person name="Spiegler S."/>
            <person name="Tivey A."/>
            <person name="Sugano S."/>
            <person name="White B."/>
            <person name="Walker D."/>
            <person name="Woodward J.R."/>
            <person name="Winckler T."/>
            <person name="Tanaka Y."/>
            <person name="Shaulsky G."/>
            <person name="Schleicher M."/>
            <person name="Weinstock G.M."/>
            <person name="Rosenthal A."/>
            <person name="Cox E.C."/>
            <person name="Chisholm R.L."/>
            <person name="Gibbs R.A."/>
            <person name="Loomis W.F."/>
            <person name="Platzer M."/>
            <person name="Kay R.R."/>
            <person name="Williams J.G."/>
            <person name="Dear P.H."/>
            <person name="Noegel A.A."/>
            <person name="Barrell B.G."/>
            <person name="Kuspa A."/>
        </authorList>
    </citation>
    <scope>NUCLEOTIDE SEQUENCE [LARGE SCALE GENOMIC DNA]</scope>
    <source>
        <strain>AX4</strain>
    </source>
</reference>
<sequence length="51" mass="6349">MKHHTNLLHYFEKFAIYYNSRPKNLKENSFVKQKKEMVPIEIKYQTLIPYF</sequence>
<protein>
    <recommendedName>
        <fullName>Uncharacterized protein DDB_G0293278</fullName>
    </recommendedName>
</protein>
<feature type="chain" id="PRO_0000344430" description="Uncharacterized protein DDB_G0293278">
    <location>
        <begin position="1"/>
        <end position="51"/>
    </location>
</feature>
<organism>
    <name type="scientific">Dictyostelium discoideum</name>
    <name type="common">Social amoeba</name>
    <dbReference type="NCBI Taxonomy" id="44689"/>
    <lineage>
        <taxon>Eukaryota</taxon>
        <taxon>Amoebozoa</taxon>
        <taxon>Evosea</taxon>
        <taxon>Eumycetozoa</taxon>
        <taxon>Dictyostelia</taxon>
        <taxon>Dictyosteliales</taxon>
        <taxon>Dictyosteliaceae</taxon>
        <taxon>Dictyostelium</taxon>
    </lineage>
</organism>